<accession>Q72KS4</accession>
<evidence type="ECO:0000255" key="1">
    <source>
        <dbReference type="HAMAP-Rule" id="MF_01973"/>
    </source>
</evidence>
<evidence type="ECO:0000255" key="2">
    <source>
        <dbReference type="PROSITE-ProRule" id="PRU01122"/>
    </source>
</evidence>
<evidence type="ECO:0000255" key="3">
    <source>
        <dbReference type="PROSITE-ProRule" id="PRU01123"/>
    </source>
</evidence>
<dbReference type="EC" id="3.4.21.53" evidence="1"/>
<dbReference type="EMBL" id="AE017221">
    <property type="protein sequence ID" value="AAS80766.1"/>
    <property type="molecule type" value="Genomic_DNA"/>
</dbReference>
<dbReference type="RefSeq" id="WP_011172865.1">
    <property type="nucleotide sequence ID" value="NC_005835.1"/>
</dbReference>
<dbReference type="PDB" id="7P6U">
    <property type="method" value="EM"/>
    <property type="resolution" value="3.90 A"/>
    <property type="chains" value="A/B/C/D/E/F=1-795"/>
</dbReference>
<dbReference type="PDBsum" id="7P6U"/>
<dbReference type="EMDB" id="EMD-13232"/>
<dbReference type="SMR" id="Q72KS4"/>
<dbReference type="MEROPS" id="S16.001"/>
<dbReference type="GeneID" id="3168778"/>
<dbReference type="KEGG" id="tth:TT_C0418"/>
<dbReference type="eggNOG" id="COG0466">
    <property type="taxonomic scope" value="Bacteria"/>
</dbReference>
<dbReference type="HOGENOM" id="CLU_004109_4_3_0"/>
<dbReference type="OrthoDB" id="9803599at2"/>
<dbReference type="Proteomes" id="UP000000592">
    <property type="component" value="Chromosome"/>
</dbReference>
<dbReference type="GO" id="GO:0005737">
    <property type="term" value="C:cytoplasm"/>
    <property type="evidence" value="ECO:0007669"/>
    <property type="project" value="UniProtKB-SubCell"/>
</dbReference>
<dbReference type="GO" id="GO:0005524">
    <property type="term" value="F:ATP binding"/>
    <property type="evidence" value="ECO:0007669"/>
    <property type="project" value="UniProtKB-UniRule"/>
</dbReference>
<dbReference type="GO" id="GO:0016887">
    <property type="term" value="F:ATP hydrolysis activity"/>
    <property type="evidence" value="ECO:0007669"/>
    <property type="project" value="UniProtKB-UniRule"/>
</dbReference>
<dbReference type="GO" id="GO:0004176">
    <property type="term" value="F:ATP-dependent peptidase activity"/>
    <property type="evidence" value="ECO:0007669"/>
    <property type="project" value="UniProtKB-UniRule"/>
</dbReference>
<dbReference type="GO" id="GO:0043565">
    <property type="term" value="F:sequence-specific DNA binding"/>
    <property type="evidence" value="ECO:0007669"/>
    <property type="project" value="UniProtKB-UniRule"/>
</dbReference>
<dbReference type="GO" id="GO:0004252">
    <property type="term" value="F:serine-type endopeptidase activity"/>
    <property type="evidence" value="ECO:0007669"/>
    <property type="project" value="UniProtKB-UniRule"/>
</dbReference>
<dbReference type="GO" id="GO:0034605">
    <property type="term" value="P:cellular response to heat"/>
    <property type="evidence" value="ECO:0007669"/>
    <property type="project" value="UniProtKB-UniRule"/>
</dbReference>
<dbReference type="GO" id="GO:0006515">
    <property type="term" value="P:protein quality control for misfolded or incompletely synthesized proteins"/>
    <property type="evidence" value="ECO:0007669"/>
    <property type="project" value="UniProtKB-UniRule"/>
</dbReference>
<dbReference type="CDD" id="cd19500">
    <property type="entry name" value="RecA-like_Lon"/>
    <property type="match status" value="1"/>
</dbReference>
<dbReference type="FunFam" id="1.20.5.5270:FF:000002">
    <property type="entry name" value="Lon protease homolog"/>
    <property type="match status" value="1"/>
</dbReference>
<dbReference type="FunFam" id="3.40.50.300:FF:000382">
    <property type="entry name" value="Lon protease homolog 2, peroxisomal"/>
    <property type="match status" value="1"/>
</dbReference>
<dbReference type="Gene3D" id="1.10.8.60">
    <property type="match status" value="1"/>
</dbReference>
<dbReference type="Gene3D" id="1.20.5.5270">
    <property type="match status" value="1"/>
</dbReference>
<dbReference type="Gene3D" id="1.20.58.1480">
    <property type="match status" value="1"/>
</dbReference>
<dbReference type="Gene3D" id="3.30.230.10">
    <property type="match status" value="1"/>
</dbReference>
<dbReference type="Gene3D" id="2.30.130.40">
    <property type="entry name" value="LON domain-like"/>
    <property type="match status" value="1"/>
</dbReference>
<dbReference type="Gene3D" id="3.40.50.300">
    <property type="entry name" value="P-loop containing nucleotide triphosphate hydrolases"/>
    <property type="match status" value="1"/>
</dbReference>
<dbReference type="HAMAP" id="MF_01973">
    <property type="entry name" value="lon_bact"/>
    <property type="match status" value="1"/>
</dbReference>
<dbReference type="InterPro" id="IPR003593">
    <property type="entry name" value="AAA+_ATPase"/>
</dbReference>
<dbReference type="InterPro" id="IPR003959">
    <property type="entry name" value="ATPase_AAA_core"/>
</dbReference>
<dbReference type="InterPro" id="IPR027543">
    <property type="entry name" value="Lon_bac"/>
</dbReference>
<dbReference type="InterPro" id="IPR004815">
    <property type="entry name" value="Lon_bac/euk-typ"/>
</dbReference>
<dbReference type="InterPro" id="IPR054594">
    <property type="entry name" value="Lon_lid"/>
</dbReference>
<dbReference type="InterPro" id="IPR008269">
    <property type="entry name" value="Lon_proteolytic"/>
</dbReference>
<dbReference type="InterPro" id="IPR027065">
    <property type="entry name" value="Lon_Prtase"/>
</dbReference>
<dbReference type="InterPro" id="IPR003111">
    <property type="entry name" value="Lon_prtase_N"/>
</dbReference>
<dbReference type="InterPro" id="IPR046336">
    <property type="entry name" value="Lon_prtase_N_sf"/>
</dbReference>
<dbReference type="InterPro" id="IPR027417">
    <property type="entry name" value="P-loop_NTPase"/>
</dbReference>
<dbReference type="InterPro" id="IPR008268">
    <property type="entry name" value="Peptidase_S16_AS"/>
</dbReference>
<dbReference type="InterPro" id="IPR015947">
    <property type="entry name" value="PUA-like_sf"/>
</dbReference>
<dbReference type="InterPro" id="IPR020568">
    <property type="entry name" value="Ribosomal_Su5_D2-typ_SF"/>
</dbReference>
<dbReference type="InterPro" id="IPR014721">
    <property type="entry name" value="Ribsml_uS5_D2-typ_fold_subgr"/>
</dbReference>
<dbReference type="NCBIfam" id="TIGR00763">
    <property type="entry name" value="lon"/>
    <property type="match status" value="1"/>
</dbReference>
<dbReference type="PANTHER" id="PTHR10046">
    <property type="entry name" value="ATP DEPENDENT LON PROTEASE FAMILY MEMBER"/>
    <property type="match status" value="1"/>
</dbReference>
<dbReference type="Pfam" id="PF00004">
    <property type="entry name" value="AAA"/>
    <property type="match status" value="1"/>
</dbReference>
<dbReference type="Pfam" id="PF05362">
    <property type="entry name" value="Lon_C"/>
    <property type="match status" value="1"/>
</dbReference>
<dbReference type="Pfam" id="PF22667">
    <property type="entry name" value="Lon_lid"/>
    <property type="match status" value="1"/>
</dbReference>
<dbReference type="Pfam" id="PF02190">
    <property type="entry name" value="LON_substr_bdg"/>
    <property type="match status" value="1"/>
</dbReference>
<dbReference type="PIRSF" id="PIRSF001174">
    <property type="entry name" value="Lon_proteas"/>
    <property type="match status" value="1"/>
</dbReference>
<dbReference type="PRINTS" id="PR00830">
    <property type="entry name" value="ENDOLAPTASE"/>
</dbReference>
<dbReference type="SMART" id="SM00382">
    <property type="entry name" value="AAA"/>
    <property type="match status" value="1"/>
</dbReference>
<dbReference type="SMART" id="SM00464">
    <property type="entry name" value="LON"/>
    <property type="match status" value="1"/>
</dbReference>
<dbReference type="SUPFAM" id="SSF52540">
    <property type="entry name" value="P-loop containing nucleoside triphosphate hydrolases"/>
    <property type="match status" value="1"/>
</dbReference>
<dbReference type="SUPFAM" id="SSF88697">
    <property type="entry name" value="PUA domain-like"/>
    <property type="match status" value="1"/>
</dbReference>
<dbReference type="SUPFAM" id="SSF54211">
    <property type="entry name" value="Ribosomal protein S5 domain 2-like"/>
    <property type="match status" value="1"/>
</dbReference>
<dbReference type="PROSITE" id="PS51787">
    <property type="entry name" value="LON_N"/>
    <property type="match status" value="1"/>
</dbReference>
<dbReference type="PROSITE" id="PS51786">
    <property type="entry name" value="LON_PROTEOLYTIC"/>
    <property type="match status" value="1"/>
</dbReference>
<dbReference type="PROSITE" id="PS01046">
    <property type="entry name" value="LON_SER"/>
    <property type="match status" value="1"/>
</dbReference>
<reference key="1">
    <citation type="journal article" date="2004" name="Nat. Biotechnol.">
        <title>The genome sequence of the extreme thermophile Thermus thermophilus.</title>
        <authorList>
            <person name="Henne A."/>
            <person name="Brueggemann H."/>
            <person name="Raasch C."/>
            <person name="Wiezer A."/>
            <person name="Hartsch T."/>
            <person name="Liesegang H."/>
            <person name="Johann A."/>
            <person name="Lienard T."/>
            <person name="Gohl O."/>
            <person name="Martinez-Arias R."/>
            <person name="Jacobi C."/>
            <person name="Starkuviene V."/>
            <person name="Schlenczeck S."/>
            <person name="Dencker S."/>
            <person name="Huber R."/>
            <person name="Klenk H.-P."/>
            <person name="Kramer W."/>
            <person name="Merkl R."/>
            <person name="Gottschalk G."/>
            <person name="Fritz H.-J."/>
        </authorList>
    </citation>
    <scope>NUCLEOTIDE SEQUENCE [LARGE SCALE GENOMIC DNA]</scope>
    <source>
        <strain>ATCC BAA-163 / DSM 7039 / HB27</strain>
    </source>
</reference>
<sequence length="795" mass="89312">MKDFLRLELPVLPLRNTVVLPHTTTGVDVGRLKSKRAVEEALSADRLLFLVTQKDPEVDDPAPEDLYAVGTLAVVKQAMRLPDGTLQVMVEARSRARLLSYVAAPYLRAVGEAIPEPPLKDPELARVLVNEVQEAFERYLQNHKTLRLDRYQQEAVKSTRDPAILADLVAHHATWTLEEKQTILETPEVEERLKRVLALLLRDLERFELDKKIAARVKEQMDQNQREYYLREQMKAIQKELGGGEDFLTEIEELRERIEKKGMPEPVKEKALKELKRLERMQPGSPEATVSRTYLDWLLEVPWTEADPEVLDISVTKRVLDEDHYGLKEVKERILEYLAVRQLTQGKEVKGHAPILCFVGPPGVGKTSLGKSIARSMNRRFHRISLGGVRDEAEIRGHRRTYIGALPGKIIQGMKQVGVVNPVFLLDEIDKLSSDWRGDPAAALLEVLDPEQNHTFTDHYLDVPYDLSKVFFITTANTLSTIPRPLLDRMEVIEIPGYTLHEKRAIARYFRWPFQVKEAGLEGRLEITDRAIERIVQEYTREAGVRNLDRELSKVARKAAKDYLEKPWEGVRVVDAEDLEAYLGVPKYRPDRAEKEPQVGAAQGLAWTPYGGTLLTIEAVAVPGTGKVNLTGNLGEVMKESAHAALTYLRAHREEWGLPEGFHKDYDLHIHVPEGATPKDGPSAGITIATALASALTGRPVRMDIAMTGEITLRGRVLPIGGVKEKLLAAHQAGIHRVILPKENAAELKEVPEEILKDLEIHFVEEVGEVLKLLLLPPPPPPAVQPDRPQPGVGA</sequence>
<protein>
    <recommendedName>
        <fullName evidence="1">Lon protease 1</fullName>
        <ecNumber evidence="1">3.4.21.53</ecNumber>
    </recommendedName>
    <alternativeName>
        <fullName evidence="1">ATP-dependent protease La 1</fullName>
    </alternativeName>
</protein>
<feature type="chain" id="PRO_0000396611" description="Lon protease 1">
    <location>
        <begin position="1"/>
        <end position="795"/>
    </location>
</feature>
<feature type="domain" description="Lon N-terminal" evidence="3">
    <location>
        <begin position="9"/>
        <end position="204"/>
    </location>
</feature>
<feature type="domain" description="Lon proteolytic" evidence="2">
    <location>
        <begin position="596"/>
        <end position="777"/>
    </location>
</feature>
<feature type="active site" evidence="1">
    <location>
        <position position="683"/>
    </location>
</feature>
<feature type="active site" evidence="1">
    <location>
        <position position="726"/>
    </location>
</feature>
<feature type="binding site" evidence="1">
    <location>
        <begin position="360"/>
        <end position="367"/>
    </location>
    <ligand>
        <name>ATP</name>
        <dbReference type="ChEBI" id="CHEBI:30616"/>
    </ligand>
</feature>
<organism>
    <name type="scientific">Thermus thermophilus (strain ATCC BAA-163 / DSM 7039 / HB27)</name>
    <dbReference type="NCBI Taxonomy" id="262724"/>
    <lineage>
        <taxon>Bacteria</taxon>
        <taxon>Thermotogati</taxon>
        <taxon>Deinococcota</taxon>
        <taxon>Deinococci</taxon>
        <taxon>Thermales</taxon>
        <taxon>Thermaceae</taxon>
        <taxon>Thermus</taxon>
    </lineage>
</organism>
<keyword id="KW-0002">3D-structure</keyword>
<keyword id="KW-0067">ATP-binding</keyword>
<keyword id="KW-0963">Cytoplasm</keyword>
<keyword id="KW-0378">Hydrolase</keyword>
<keyword id="KW-0547">Nucleotide-binding</keyword>
<keyword id="KW-0645">Protease</keyword>
<keyword id="KW-0720">Serine protease</keyword>
<keyword id="KW-0346">Stress response</keyword>
<comment type="function">
    <text evidence="1">ATP-dependent serine protease that mediates the selective degradation of mutant and abnormal proteins as well as certain short-lived regulatory proteins. Required for cellular homeostasis and for survival from DNA damage and developmental changes induced by stress. Degrades polypeptides processively to yield small peptide fragments that are 5 to 10 amino acids long. Binds to DNA in a double-stranded, site-specific manner.</text>
</comment>
<comment type="catalytic activity">
    <reaction evidence="1">
        <text>Hydrolysis of proteins in presence of ATP.</text>
        <dbReference type="EC" id="3.4.21.53"/>
    </reaction>
</comment>
<comment type="subunit">
    <text evidence="1">Homohexamer. Organized in a ring with a central cavity.</text>
</comment>
<comment type="subcellular location">
    <subcellularLocation>
        <location evidence="1">Cytoplasm</location>
    </subcellularLocation>
</comment>
<comment type="induction">
    <text evidence="1">By heat shock.</text>
</comment>
<comment type="similarity">
    <text evidence="1">Belongs to the peptidase S16 family.</text>
</comment>
<gene>
    <name evidence="1" type="primary">lon1</name>
    <name type="ordered locus">TT_C0418</name>
</gene>
<proteinExistence type="evidence at protein level"/>
<name>LON1_THET2</name>